<dbReference type="SMR" id="C0HKH8"/>
<dbReference type="GO" id="GO:0006952">
    <property type="term" value="P:defense response"/>
    <property type="evidence" value="ECO:0007669"/>
    <property type="project" value="UniProtKB-KW"/>
</dbReference>
<dbReference type="InterPro" id="IPR005535">
    <property type="entry name" value="Cyclotide"/>
</dbReference>
<dbReference type="InterPro" id="IPR012323">
    <property type="entry name" value="Cyclotide_bracelet_CS"/>
</dbReference>
<dbReference type="InterPro" id="IPR036146">
    <property type="entry name" value="Cyclotide_sf"/>
</dbReference>
<dbReference type="Pfam" id="PF03784">
    <property type="entry name" value="Cyclotide"/>
    <property type="match status" value="1"/>
</dbReference>
<dbReference type="PIRSF" id="PIRSF037891">
    <property type="entry name" value="Cycloviolacin"/>
    <property type="match status" value="1"/>
</dbReference>
<dbReference type="SUPFAM" id="SSF57038">
    <property type="entry name" value="Cyclotides"/>
    <property type="match status" value="1"/>
</dbReference>
<dbReference type="PROSITE" id="PS51052">
    <property type="entry name" value="CYCLOTIDE"/>
    <property type="match status" value="1"/>
</dbReference>
<dbReference type="PROSITE" id="PS60008">
    <property type="entry name" value="CYCLOTIDE_BRACELET"/>
    <property type="match status" value="1"/>
</dbReference>
<proteinExistence type="evidence at protein level"/>
<evidence type="ECO:0000255" key="1">
    <source>
        <dbReference type="PROSITE-ProRule" id="PRU00395"/>
    </source>
</evidence>
<evidence type="ECO:0000269" key="2">
    <source>
    </source>
</evidence>
<evidence type="ECO:0000303" key="3">
    <source>
    </source>
</evidence>
<evidence type="ECO:0000305" key="4"/>
<feature type="peptide" id="PRO_0000440218" description="Circulin A" evidence="2">
    <location>
        <begin position="1"/>
        <end position="30"/>
    </location>
</feature>
<feature type="disulfide bond" evidence="1">
    <location>
        <begin position="4"/>
        <end position="20"/>
    </location>
</feature>
<feature type="disulfide bond" evidence="1">
    <location>
        <begin position="8"/>
        <end position="22"/>
    </location>
</feature>
<feature type="disulfide bond" evidence="1">
    <location>
        <begin position="13"/>
        <end position="27"/>
    </location>
</feature>
<feature type="cross-link" description="Cyclopeptide (Gly-Asn)" evidence="2">
    <location>
        <begin position="1"/>
        <end position="30"/>
    </location>
</feature>
<reference evidence="4" key="1">
    <citation type="journal article" date="2012" name="J. Biol. Chem.">
        <title>Novel Cyclotides and Uncyclotides with Highly Shortened Precursors from Chassalia chartacea and Effects of Methionine Oxidation on Bioactivities.</title>
        <authorList>
            <person name="Nguyen G.K."/>
            <person name="Lim W.H."/>
            <person name="Nguyen P.Q."/>
            <person name="Tam J.P."/>
        </authorList>
    </citation>
    <scope>PROTEIN SEQUENCE</scope>
    <scope>TISSUE SPECIFICITY</scope>
    <scope>MASS SPECTROMETRY</scope>
    <scope>IDENTIFICATION BY MASS SPECTROMETRY</scope>
</reference>
<protein>
    <recommendedName>
        <fullName evidence="3">Circulin A</fullName>
    </recommendedName>
    <alternativeName>
        <fullName evidence="3">Cyclotide cir A</fullName>
    </alternativeName>
</protein>
<accession>C0HKH8</accession>
<name>CIRA_CHACT</name>
<sequence>GIPCGESCVWIPCISAALGCSCKNKVCYRN</sequence>
<comment type="function">
    <text evidence="1">Probably participates in a plant defense mechanism.</text>
</comment>
<comment type="tissue specificity">
    <text evidence="2">Expressed in fruit, pedicel, root and stem but not in leaf (at protein level).</text>
</comment>
<comment type="domain">
    <text evidence="4">The presence of a 'disulfide through disulfide knot' structurally defines this protein as a knottin.</text>
</comment>
<comment type="PTM">
    <text evidence="1 2">This is a cyclic peptide.</text>
</comment>
<comment type="mass spectrometry"/>
<comment type="similarity">
    <text evidence="1">Belongs to the cyclotide family. Bracelet subfamily.</text>
</comment>
<comment type="caution">
    <text evidence="4">This peptide is cyclic. The start position was chosen by similarity to chassatide C8 for which the DNA sequence is known.</text>
</comment>
<organism evidence="3">
    <name type="scientific">Chassalia chartacea</name>
    <name type="common">Chassalia curviflora</name>
    <dbReference type="NCBI Taxonomy" id="510798"/>
    <lineage>
        <taxon>Eukaryota</taxon>
        <taxon>Viridiplantae</taxon>
        <taxon>Streptophyta</taxon>
        <taxon>Embryophyta</taxon>
        <taxon>Tracheophyta</taxon>
        <taxon>Spermatophyta</taxon>
        <taxon>Magnoliopsida</taxon>
        <taxon>eudicotyledons</taxon>
        <taxon>Gunneridae</taxon>
        <taxon>Pentapetalae</taxon>
        <taxon>asterids</taxon>
        <taxon>lamiids</taxon>
        <taxon>Gentianales</taxon>
        <taxon>Rubiaceae</taxon>
        <taxon>Rubioideae</taxon>
        <taxon>Palicoureeae</taxon>
        <taxon>Chassalia</taxon>
    </lineage>
</organism>
<keyword id="KW-0903">Direct protein sequencing</keyword>
<keyword id="KW-1015">Disulfide bond</keyword>
<keyword id="KW-0960">Knottin</keyword>
<keyword id="KW-0611">Plant defense</keyword>